<gene>
    <name type="primary">ago3</name>
    <name type="synonym">eif2c3</name>
    <name type="ORF">si:dkey-3n22.3</name>
</gene>
<sequence>MEIGTTGAVGAAPQFSVPRRPGYGTMGKPIKLLANCFQVDIPKMDVYLYDVDIKPEKCPRRVNREVVDSMVQHFKVTIFGDRRPVYDGKKSLYTAQPLPVASAGVDLDVTLPGEGGKDRIFKVTIKFVSLVSWHMLHEVLTGRSTPDPLELDKPISTNPVHAVDVVLRHLPSMRYTPVGRSFFSSPEGYDHPLGGGREVWFGFHQSVRPAMWKMMLNIDVSATAFYKAQPVIQFMCEVLDIHNIDEQPRPLTDSHRVKFTKEIKGLKVEVTHCGTMRRKYRVCNVTRRPASHQTFPLQLENGQTVERTVAQYFREKYNLQLKYPHLPCLQVGQEQKHTYLPLEVCNIVAGQRCIKKLTDNQTSTMIKATARSAPDRQEEISRLVRSANYNSDPFVQEFQFRVRDEMAEVTGRVLPAPMLQYGGRNRTVATPSHGVWDMRGKQFHTGVEIKMWAIACFATQRQCREEVLKGFTDQLRKISKDAGMPIQGQPCFCKYAQGADNVEPMFRHLKNTYAGLQLIIVILPGKTPVYAEVKRVGDTLLGMATQCVQVKNVVKTSPQTLSNLCLKINVKLGGINNILVPHQRPSVFQQPVIFLGADVTHPPAGDGKKPSIAAVVGSMDAHPSRYCATVRVQRPRQEVIQDLASMVRELLIQFYKSTHYKPTRIIFYRDGVSEGQFRQVLYYELLAIREACISLEKEYQPGITYIVVQKRHHTRLFCADRAERVGRSGNIPAGTTVDTDITHPYEFDFYLCSHAGIQGTSRPSHYYVLWDDNCFTADEFQLLTYQLCHTYVRCTRSVSIPAPAYYAHLVAFRARYHLVDKEHDSAEGSHVSGQSNGRDPQALAKAVQIHHDTLRTMYFA</sequence>
<reference key="1">
    <citation type="journal article" date="2013" name="Nature">
        <title>The zebrafish reference genome sequence and its relationship to the human genome.</title>
        <authorList>
            <person name="Howe K."/>
            <person name="Clark M.D."/>
            <person name="Torroja C.F."/>
            <person name="Torrance J."/>
            <person name="Berthelot C."/>
            <person name="Muffato M."/>
            <person name="Collins J.E."/>
            <person name="Humphray S."/>
            <person name="McLaren K."/>
            <person name="Matthews L."/>
            <person name="McLaren S."/>
            <person name="Sealy I."/>
            <person name="Caccamo M."/>
            <person name="Churcher C."/>
            <person name="Scott C."/>
            <person name="Barrett J.C."/>
            <person name="Koch R."/>
            <person name="Rauch G.J."/>
            <person name="White S."/>
            <person name="Chow W."/>
            <person name="Kilian B."/>
            <person name="Quintais L.T."/>
            <person name="Guerra-Assuncao J.A."/>
            <person name="Zhou Y."/>
            <person name="Gu Y."/>
            <person name="Yen J."/>
            <person name="Vogel J.H."/>
            <person name="Eyre T."/>
            <person name="Redmond S."/>
            <person name="Banerjee R."/>
            <person name="Chi J."/>
            <person name="Fu B."/>
            <person name="Langley E."/>
            <person name="Maguire S.F."/>
            <person name="Laird G.K."/>
            <person name="Lloyd D."/>
            <person name="Kenyon E."/>
            <person name="Donaldson S."/>
            <person name="Sehra H."/>
            <person name="Almeida-King J."/>
            <person name="Loveland J."/>
            <person name="Trevanion S."/>
            <person name="Jones M."/>
            <person name="Quail M."/>
            <person name="Willey D."/>
            <person name="Hunt A."/>
            <person name="Burton J."/>
            <person name="Sims S."/>
            <person name="McLay K."/>
            <person name="Plumb B."/>
            <person name="Davis J."/>
            <person name="Clee C."/>
            <person name="Oliver K."/>
            <person name="Clark R."/>
            <person name="Riddle C."/>
            <person name="Elliot D."/>
            <person name="Threadgold G."/>
            <person name="Harden G."/>
            <person name="Ware D."/>
            <person name="Begum S."/>
            <person name="Mortimore B."/>
            <person name="Kerry G."/>
            <person name="Heath P."/>
            <person name="Phillimore B."/>
            <person name="Tracey A."/>
            <person name="Corby N."/>
            <person name="Dunn M."/>
            <person name="Johnson C."/>
            <person name="Wood J."/>
            <person name="Clark S."/>
            <person name="Pelan S."/>
            <person name="Griffiths G."/>
            <person name="Smith M."/>
            <person name="Glithero R."/>
            <person name="Howden P."/>
            <person name="Barker N."/>
            <person name="Lloyd C."/>
            <person name="Stevens C."/>
            <person name="Harley J."/>
            <person name="Holt K."/>
            <person name="Panagiotidis G."/>
            <person name="Lovell J."/>
            <person name="Beasley H."/>
            <person name="Henderson C."/>
            <person name="Gordon D."/>
            <person name="Auger K."/>
            <person name="Wright D."/>
            <person name="Collins J."/>
            <person name="Raisen C."/>
            <person name="Dyer L."/>
            <person name="Leung K."/>
            <person name="Robertson L."/>
            <person name="Ambridge K."/>
            <person name="Leongamornlert D."/>
            <person name="McGuire S."/>
            <person name="Gilderthorp R."/>
            <person name="Griffiths C."/>
            <person name="Manthravadi D."/>
            <person name="Nichol S."/>
            <person name="Barker G."/>
            <person name="Whitehead S."/>
            <person name="Kay M."/>
            <person name="Brown J."/>
            <person name="Murnane C."/>
            <person name="Gray E."/>
            <person name="Humphries M."/>
            <person name="Sycamore N."/>
            <person name="Barker D."/>
            <person name="Saunders D."/>
            <person name="Wallis J."/>
            <person name="Babbage A."/>
            <person name="Hammond S."/>
            <person name="Mashreghi-Mohammadi M."/>
            <person name="Barr L."/>
            <person name="Martin S."/>
            <person name="Wray P."/>
            <person name="Ellington A."/>
            <person name="Matthews N."/>
            <person name="Ellwood M."/>
            <person name="Woodmansey R."/>
            <person name="Clark G."/>
            <person name="Cooper J."/>
            <person name="Tromans A."/>
            <person name="Grafham D."/>
            <person name="Skuce C."/>
            <person name="Pandian R."/>
            <person name="Andrews R."/>
            <person name="Harrison E."/>
            <person name="Kimberley A."/>
            <person name="Garnett J."/>
            <person name="Fosker N."/>
            <person name="Hall R."/>
            <person name="Garner P."/>
            <person name="Kelly D."/>
            <person name="Bird C."/>
            <person name="Palmer S."/>
            <person name="Gehring I."/>
            <person name="Berger A."/>
            <person name="Dooley C.M."/>
            <person name="Ersan-Urun Z."/>
            <person name="Eser C."/>
            <person name="Geiger H."/>
            <person name="Geisler M."/>
            <person name="Karotki L."/>
            <person name="Kirn A."/>
            <person name="Konantz J."/>
            <person name="Konantz M."/>
            <person name="Oberlander M."/>
            <person name="Rudolph-Geiger S."/>
            <person name="Teucke M."/>
            <person name="Lanz C."/>
            <person name="Raddatz G."/>
            <person name="Osoegawa K."/>
            <person name="Zhu B."/>
            <person name="Rapp A."/>
            <person name="Widaa S."/>
            <person name="Langford C."/>
            <person name="Yang F."/>
            <person name="Schuster S.C."/>
            <person name="Carter N.P."/>
            <person name="Harrow J."/>
            <person name="Ning Z."/>
            <person name="Herrero J."/>
            <person name="Searle S.M."/>
            <person name="Enright A."/>
            <person name="Geisler R."/>
            <person name="Plasterk R.H."/>
            <person name="Lee C."/>
            <person name="Westerfield M."/>
            <person name="de Jong P.J."/>
            <person name="Zon L.I."/>
            <person name="Postlethwait J.H."/>
            <person name="Nusslein-Volhard C."/>
            <person name="Hubbard T.J."/>
            <person name="Roest Crollius H."/>
            <person name="Rogers J."/>
            <person name="Stemple D.L."/>
        </authorList>
    </citation>
    <scope>NUCLEOTIDE SEQUENCE [LARGE SCALE GENOMIC DNA]</scope>
    <source>
        <strain>Tuebingen</strain>
    </source>
</reference>
<comment type="function">
    <text evidence="2">Required for RNA-mediated gene silencing (RNAi). Binds to short RNAs such as microRNAs (miRNAs) and represses the translation of mRNAs which are complementary to them. Possesses RNA slicer activity but only on select RNAs bearing 5'- and 3'-flanking sequences to the region of guide-target complementarity.</text>
</comment>
<comment type="catalytic activity">
    <reaction evidence="1">
        <text>Endonucleolytic cleavage to 5'-phosphomonoester.</text>
        <dbReference type="EC" id="3.1.26.n2"/>
    </reaction>
</comment>
<comment type="subcellular location">
    <subcellularLocation>
        <location evidence="2">Cytoplasm</location>
        <location evidence="2">P-body</location>
    </subcellularLocation>
</comment>
<comment type="similarity">
    <text evidence="2">Belongs to the argonaute family. Ago subfamily.</text>
</comment>
<feature type="chain" id="PRO_0000371224" description="Protein argonaute-3">
    <location>
        <begin position="1"/>
        <end position="860"/>
    </location>
</feature>
<feature type="domain" description="PAZ" evidence="3">
    <location>
        <begin position="230"/>
        <end position="349"/>
    </location>
</feature>
<feature type="domain" description="Piwi" evidence="2">
    <location>
        <begin position="518"/>
        <end position="819"/>
    </location>
</feature>
<feature type="region of interest" description="Interaction with guide RNA" evidence="1">
    <location>
        <begin position="530"/>
        <end position="567"/>
    </location>
</feature>
<feature type="region of interest" description="Interaction with guide RNA" evidence="1">
    <location>
        <begin position="758"/>
        <end position="805"/>
    </location>
</feature>
<feature type="binding site" evidence="1">
    <location>
        <position position="598"/>
    </location>
    <ligand>
        <name>a divalent metal cation</name>
        <dbReference type="ChEBI" id="CHEBI:60240"/>
    </ligand>
</feature>
<feature type="binding site" evidence="1">
    <location>
        <position position="638"/>
    </location>
    <ligand>
        <name>a divalent metal cation</name>
        <dbReference type="ChEBI" id="CHEBI:60240"/>
    </ligand>
</feature>
<feature type="binding site" evidence="1">
    <location>
        <position position="670"/>
    </location>
    <ligand>
        <name>a divalent metal cation</name>
        <dbReference type="ChEBI" id="CHEBI:60240"/>
    </ligand>
</feature>
<feature type="binding site" evidence="1">
    <location>
        <position position="808"/>
    </location>
    <ligand>
        <name>a divalent metal cation</name>
        <dbReference type="ChEBI" id="CHEBI:60240"/>
    </ligand>
</feature>
<keyword id="KW-0963">Cytoplasm</keyword>
<keyword id="KW-0255">Endonuclease</keyword>
<keyword id="KW-0378">Hydrolase</keyword>
<keyword id="KW-0479">Metal-binding</keyword>
<keyword id="KW-0540">Nuclease</keyword>
<keyword id="KW-1185">Reference proteome</keyword>
<keyword id="KW-0687">Ribonucleoprotein</keyword>
<keyword id="KW-0694">RNA-binding</keyword>
<keyword id="KW-0943">RNA-mediated gene silencing</keyword>
<keyword id="KW-0810">Translation regulation</keyword>
<proteinExistence type="inferred from homology"/>
<protein>
    <recommendedName>
        <fullName evidence="2">Protein argonaute-3</fullName>
        <shortName evidence="2">Argonaute3</shortName>
        <ecNumber evidence="1">3.1.26.n2</ecNumber>
    </recommendedName>
    <alternativeName>
        <fullName>Argonaute RISC catalytic component 3</fullName>
    </alternativeName>
    <alternativeName>
        <fullName evidence="2">Eukaryotic translation initiation factor 2C 3</fullName>
        <shortName evidence="2">eIF-2C 3</shortName>
        <shortName evidence="2">eIF2C 3</shortName>
    </alternativeName>
</protein>
<dbReference type="EC" id="3.1.26.n2" evidence="1"/>
<dbReference type="EMBL" id="BX005424">
    <property type="protein sequence ID" value="CAM47011.1"/>
    <property type="molecule type" value="Genomic_DNA"/>
</dbReference>
<dbReference type="RefSeq" id="NP_001153500.1">
    <property type="nucleotide sequence ID" value="NM_001160028.1"/>
</dbReference>
<dbReference type="SMR" id="A3KPK0"/>
<dbReference type="FunCoup" id="A3KPK0">
    <property type="interactions" value="1663"/>
</dbReference>
<dbReference type="STRING" id="7955.ENSDARP00000086246"/>
<dbReference type="PaxDb" id="7955-ENSDARP00000086246"/>
<dbReference type="PeptideAtlas" id="A3KPK0"/>
<dbReference type="Ensembl" id="ENSDART00000091813">
    <property type="protein sequence ID" value="ENSDARP00000086246"/>
    <property type="gene ID" value="ENSDARG00000063079"/>
</dbReference>
<dbReference type="GeneID" id="568159"/>
<dbReference type="KEGG" id="dre:568159"/>
<dbReference type="AGR" id="ZFIN:ZDB-GENE-060503-452"/>
<dbReference type="CTD" id="568159"/>
<dbReference type="ZFIN" id="ZDB-GENE-060503-452">
    <property type="gene designation" value="ago3b"/>
</dbReference>
<dbReference type="eggNOG" id="KOG1041">
    <property type="taxonomic scope" value="Eukaryota"/>
</dbReference>
<dbReference type="HOGENOM" id="CLU_004544_0_0_1"/>
<dbReference type="InParanoid" id="A3KPK0"/>
<dbReference type="OrthoDB" id="10252740at2759"/>
<dbReference type="PhylomeDB" id="A3KPK0"/>
<dbReference type="TreeFam" id="TF101510"/>
<dbReference type="PRO" id="PR:A3KPK0"/>
<dbReference type="Proteomes" id="UP000000437">
    <property type="component" value="Chromosome 19"/>
</dbReference>
<dbReference type="Bgee" id="ENSDARG00000063079">
    <property type="expression patterns" value="Expressed in early embryo and 21 other cell types or tissues"/>
</dbReference>
<dbReference type="ExpressionAtlas" id="A3KPK0">
    <property type="expression patterns" value="baseline and differential"/>
</dbReference>
<dbReference type="GO" id="GO:0005737">
    <property type="term" value="C:cytoplasm"/>
    <property type="evidence" value="ECO:0000318"/>
    <property type="project" value="GO_Central"/>
</dbReference>
<dbReference type="GO" id="GO:0036464">
    <property type="term" value="C:cytoplasmic ribonucleoprotein granule"/>
    <property type="evidence" value="ECO:0000318"/>
    <property type="project" value="GO_Central"/>
</dbReference>
<dbReference type="GO" id="GO:0005634">
    <property type="term" value="C:nucleus"/>
    <property type="evidence" value="ECO:0000318"/>
    <property type="project" value="GO_Central"/>
</dbReference>
<dbReference type="GO" id="GO:0000932">
    <property type="term" value="C:P-body"/>
    <property type="evidence" value="ECO:0007669"/>
    <property type="project" value="UniProtKB-SubCell"/>
</dbReference>
<dbReference type="GO" id="GO:0016442">
    <property type="term" value="C:RISC complex"/>
    <property type="evidence" value="ECO:0000318"/>
    <property type="project" value="GO_Central"/>
</dbReference>
<dbReference type="GO" id="GO:0090624">
    <property type="term" value="F:endoribonuclease activity, cleaving miRNA-paired mRNA"/>
    <property type="evidence" value="ECO:0000250"/>
    <property type="project" value="UniProtKB"/>
</dbReference>
<dbReference type="GO" id="GO:0046872">
    <property type="term" value="F:metal ion binding"/>
    <property type="evidence" value="ECO:0007669"/>
    <property type="project" value="UniProtKB-KW"/>
</dbReference>
<dbReference type="GO" id="GO:0035198">
    <property type="term" value="F:miRNA binding"/>
    <property type="evidence" value="ECO:0000318"/>
    <property type="project" value="GO_Central"/>
</dbReference>
<dbReference type="GO" id="GO:0004521">
    <property type="term" value="F:RNA endonuclease activity"/>
    <property type="evidence" value="ECO:0000250"/>
    <property type="project" value="UniProtKB"/>
</dbReference>
<dbReference type="GO" id="GO:0003727">
    <property type="term" value="F:single-stranded RNA binding"/>
    <property type="evidence" value="ECO:0000318"/>
    <property type="project" value="GO_Central"/>
</dbReference>
<dbReference type="GO" id="GO:0035278">
    <property type="term" value="P:miRNA-mediated gene silencing by inhibition of translation"/>
    <property type="evidence" value="ECO:0000250"/>
    <property type="project" value="UniProtKB"/>
</dbReference>
<dbReference type="GO" id="GO:0006402">
    <property type="term" value="P:mRNA catabolic process"/>
    <property type="evidence" value="ECO:0000250"/>
    <property type="project" value="UniProtKB"/>
</dbReference>
<dbReference type="GO" id="GO:0031054">
    <property type="term" value="P:pre-miRNA processing"/>
    <property type="evidence" value="ECO:0000318"/>
    <property type="project" value="GO_Central"/>
</dbReference>
<dbReference type="GO" id="GO:0072091">
    <property type="term" value="P:regulation of stem cell proliferation"/>
    <property type="evidence" value="ECO:0007669"/>
    <property type="project" value="InterPro"/>
</dbReference>
<dbReference type="GO" id="GO:0035194">
    <property type="term" value="P:regulatory ncRNA-mediated post-transcriptional gene silencing"/>
    <property type="evidence" value="ECO:0000318"/>
    <property type="project" value="GO_Central"/>
</dbReference>
<dbReference type="CDD" id="cd02846">
    <property type="entry name" value="PAZ_argonaute_like"/>
    <property type="match status" value="1"/>
</dbReference>
<dbReference type="CDD" id="cd04657">
    <property type="entry name" value="Piwi_ago-like"/>
    <property type="match status" value="1"/>
</dbReference>
<dbReference type="FunFam" id="2.170.260.10:FF:000001">
    <property type="entry name" value="Protein argonaute-2"/>
    <property type="match status" value="1"/>
</dbReference>
<dbReference type="FunFam" id="3.30.420.10:FF:000001">
    <property type="entry name" value="Protein argonaute-2"/>
    <property type="match status" value="1"/>
</dbReference>
<dbReference type="FunFam" id="3.40.50.2300:FF:000005">
    <property type="entry name" value="Protein argonaute-2"/>
    <property type="match status" value="1"/>
</dbReference>
<dbReference type="Gene3D" id="3.40.50.2300">
    <property type="match status" value="1"/>
</dbReference>
<dbReference type="Gene3D" id="2.170.260.10">
    <property type="entry name" value="paz domain"/>
    <property type="match status" value="1"/>
</dbReference>
<dbReference type="Gene3D" id="3.30.420.10">
    <property type="entry name" value="Ribonuclease H-like superfamily/Ribonuclease H"/>
    <property type="match status" value="1"/>
</dbReference>
<dbReference type="HAMAP" id="MF_03032">
    <property type="entry name" value="AGO3"/>
    <property type="match status" value="1"/>
</dbReference>
<dbReference type="InterPro" id="IPR028603">
    <property type="entry name" value="AGO3"/>
</dbReference>
<dbReference type="InterPro" id="IPR014811">
    <property type="entry name" value="ArgoL1"/>
</dbReference>
<dbReference type="InterPro" id="IPR032472">
    <property type="entry name" value="ArgoL2"/>
</dbReference>
<dbReference type="InterPro" id="IPR032473">
    <property type="entry name" value="Argonaute_Mid_dom"/>
</dbReference>
<dbReference type="InterPro" id="IPR032474">
    <property type="entry name" value="Argonaute_N"/>
</dbReference>
<dbReference type="InterPro" id="IPR003100">
    <property type="entry name" value="PAZ_dom"/>
</dbReference>
<dbReference type="InterPro" id="IPR036085">
    <property type="entry name" value="PAZ_dom_sf"/>
</dbReference>
<dbReference type="InterPro" id="IPR003165">
    <property type="entry name" value="Piwi"/>
</dbReference>
<dbReference type="InterPro" id="IPR045246">
    <property type="entry name" value="Piwi_ago-like"/>
</dbReference>
<dbReference type="InterPro" id="IPR012337">
    <property type="entry name" value="RNaseH-like_sf"/>
</dbReference>
<dbReference type="InterPro" id="IPR036397">
    <property type="entry name" value="RNaseH_sf"/>
</dbReference>
<dbReference type="PANTHER" id="PTHR22891">
    <property type="entry name" value="EUKARYOTIC TRANSLATION INITIATION FACTOR 2C"/>
    <property type="match status" value="1"/>
</dbReference>
<dbReference type="Pfam" id="PF08699">
    <property type="entry name" value="ArgoL1"/>
    <property type="match status" value="1"/>
</dbReference>
<dbReference type="Pfam" id="PF16488">
    <property type="entry name" value="ArgoL2"/>
    <property type="match status" value="1"/>
</dbReference>
<dbReference type="Pfam" id="PF16487">
    <property type="entry name" value="ArgoMid"/>
    <property type="match status" value="1"/>
</dbReference>
<dbReference type="Pfam" id="PF16486">
    <property type="entry name" value="ArgoN"/>
    <property type="match status" value="1"/>
</dbReference>
<dbReference type="Pfam" id="PF02170">
    <property type="entry name" value="PAZ"/>
    <property type="match status" value="1"/>
</dbReference>
<dbReference type="Pfam" id="PF02171">
    <property type="entry name" value="Piwi"/>
    <property type="match status" value="1"/>
</dbReference>
<dbReference type="SMART" id="SM01163">
    <property type="entry name" value="DUF1785"/>
    <property type="match status" value="1"/>
</dbReference>
<dbReference type="SMART" id="SM00949">
    <property type="entry name" value="PAZ"/>
    <property type="match status" value="1"/>
</dbReference>
<dbReference type="SMART" id="SM00950">
    <property type="entry name" value="Piwi"/>
    <property type="match status" value="1"/>
</dbReference>
<dbReference type="SUPFAM" id="SSF101690">
    <property type="entry name" value="PAZ domain"/>
    <property type="match status" value="1"/>
</dbReference>
<dbReference type="SUPFAM" id="SSF53098">
    <property type="entry name" value="Ribonuclease H-like"/>
    <property type="match status" value="1"/>
</dbReference>
<dbReference type="PROSITE" id="PS50821">
    <property type="entry name" value="PAZ"/>
    <property type="match status" value="1"/>
</dbReference>
<dbReference type="PROSITE" id="PS50822">
    <property type="entry name" value="PIWI"/>
    <property type="match status" value="1"/>
</dbReference>
<evidence type="ECO:0000250" key="1">
    <source>
        <dbReference type="UniProtKB" id="Q9H9G7"/>
    </source>
</evidence>
<evidence type="ECO:0000255" key="2">
    <source>
        <dbReference type="HAMAP-Rule" id="MF_03032"/>
    </source>
</evidence>
<evidence type="ECO:0000255" key="3">
    <source>
        <dbReference type="PROSITE-ProRule" id="PRU00142"/>
    </source>
</evidence>
<organism>
    <name type="scientific">Danio rerio</name>
    <name type="common">Zebrafish</name>
    <name type="synonym">Brachydanio rerio</name>
    <dbReference type="NCBI Taxonomy" id="7955"/>
    <lineage>
        <taxon>Eukaryota</taxon>
        <taxon>Metazoa</taxon>
        <taxon>Chordata</taxon>
        <taxon>Craniata</taxon>
        <taxon>Vertebrata</taxon>
        <taxon>Euteleostomi</taxon>
        <taxon>Actinopterygii</taxon>
        <taxon>Neopterygii</taxon>
        <taxon>Teleostei</taxon>
        <taxon>Ostariophysi</taxon>
        <taxon>Cypriniformes</taxon>
        <taxon>Danionidae</taxon>
        <taxon>Danioninae</taxon>
        <taxon>Danio</taxon>
    </lineage>
</organism>
<accession>A3KPK0</accession>
<name>AGO3_DANRE</name>